<keyword id="KW-0002">3D-structure</keyword>
<keyword id="KW-0004">4Fe-4S</keyword>
<keyword id="KW-1003">Cell membrane</keyword>
<keyword id="KW-0408">Iron</keyword>
<keyword id="KW-0411">Iron-sulfur</keyword>
<keyword id="KW-0472">Membrane</keyword>
<keyword id="KW-0479">Metal-binding</keyword>
<keyword id="KW-0520">NAD</keyword>
<keyword id="KW-0874">Quinone</keyword>
<keyword id="KW-1185">Reference proteome</keyword>
<keyword id="KW-0677">Repeat</keyword>
<keyword id="KW-1278">Translocase</keyword>
<sequence length="182" mass="20080">MTLKALAQSLGITLKYLFSKPVTVPYPDAPVALKPRFHGRHVLTRHPNGLEKCIGCSLCAAACPAYAIYVEPAENDPENPVSAGERYAKVYEINMLRCIFCGLCEEACPTGAIVLGYDFEMADYEYSDLVYGKEDMLVDVVGTKPQRREAKRTGKPVKVGYVVPYVRPELEGFKAPTEGGKR</sequence>
<comment type="function">
    <text evidence="1 3">NDH-1 shuttles electrons from NADH, via FMN and iron-sulfur (Fe-S) centers, to quinones in the respiratory chain. The immediate electron acceptor for the enzyme in this species is menaquinone. Couples the redox reaction to proton translocation (for every two electrons transferred, four hydrogen ions are translocated across the cytoplasmic membrane), and thus conserves the redox energy in a proton gradient required for the synthesis of ATP. The role of the Nqo9 subunit appears to provide a 'connecting chain' of two clusters between cluster N5 and the terminal cluster N2, and to stabilize the structure of the complex by interacting with other subunits.</text>
</comment>
<comment type="catalytic activity">
    <reaction evidence="1">
        <text>a quinone + NADH + 5 H(+)(in) = a quinol + NAD(+) + 4 H(+)(out)</text>
        <dbReference type="Rhea" id="RHEA:57888"/>
        <dbReference type="ChEBI" id="CHEBI:15378"/>
        <dbReference type="ChEBI" id="CHEBI:24646"/>
        <dbReference type="ChEBI" id="CHEBI:57540"/>
        <dbReference type="ChEBI" id="CHEBI:57945"/>
        <dbReference type="ChEBI" id="CHEBI:132124"/>
    </reaction>
</comment>
<comment type="cofactor">
    <cofactor evidence="1">
        <name>[4Fe-4S] cluster</name>
        <dbReference type="ChEBI" id="CHEBI:49883"/>
    </cofactor>
    <text evidence="1">Binds 2 [4Fe-4S] clusters per subunit. The [4Fe-4S] clusters are referred to as N6a and N6b.</text>
</comment>
<comment type="subunit">
    <text evidence="1 2">NDH-1 is composed of 15 different subunits, Nqo1 to Nqo15. The complex has a L-shaped structure, with the hydrophobic arm (subunits Nqo7, Nqo8 and Nqo10 to Nqo14) embedded in the membrane and the hydrophilic peripheral arm (subunits Nqo1 to Nqo6, Nqo9 and Nqo15) protruding into the bacterial cytoplasm. The hydrophilic domain contains all the redox centers.</text>
</comment>
<comment type="subcellular location">
    <subcellularLocation>
        <location evidence="5">Cell membrane</location>
        <topology evidence="5">Peripheral membrane protein</topology>
        <orientation evidence="5">Cytoplasmic side</orientation>
    </subcellularLocation>
</comment>
<comment type="similarity">
    <text evidence="4">Belongs to the complex I 23 kDa subunit family.</text>
</comment>
<reference key="1">
    <citation type="journal article" date="1997" name="J. Biol. Chem.">
        <title>The proton-translocating NADH-quinone oxidoreductase (NDH-1) of thermophilic bacterium Thermus thermophilus HB-8. Complete DNA sequence of the gene cluster and thermostable properties of the expressed NQO2 subunit.</title>
        <authorList>
            <person name="Yano T."/>
            <person name="Chu S.S."/>
            <person name="Sled' V.D."/>
            <person name="Ohnishi T."/>
            <person name="Yagi T."/>
        </authorList>
    </citation>
    <scope>NUCLEOTIDE SEQUENCE [GENOMIC DNA]</scope>
    <source>
        <strain>ATCC 27634 / DSM 579 / HB8</strain>
    </source>
</reference>
<reference key="2">
    <citation type="submission" date="2004-11" db="EMBL/GenBank/DDBJ databases">
        <title>Complete genome sequence of Thermus thermophilus HB8.</title>
        <authorList>
            <person name="Masui R."/>
            <person name="Kurokawa K."/>
            <person name="Nakagawa N."/>
            <person name="Tokunaga F."/>
            <person name="Koyama Y."/>
            <person name="Shibata T."/>
            <person name="Oshima T."/>
            <person name="Yokoyama S."/>
            <person name="Yasunaga T."/>
            <person name="Kuramitsu S."/>
        </authorList>
    </citation>
    <scope>NUCLEOTIDE SEQUENCE [LARGE SCALE GENOMIC DNA]</scope>
    <source>
        <strain>ATCC 27634 / DSM 579 / HB8</strain>
    </source>
</reference>
<reference key="3">
    <citation type="journal article" date="2006" name="Biochemistry">
        <title>Identification of a novel subunit of respiratory complex I from Thermus thermophilus.</title>
        <authorList>
            <person name="Hinchliffe P."/>
            <person name="Carroll J."/>
            <person name="Sazanov L.A."/>
        </authorList>
    </citation>
    <scope>IDENTIFICATION BY MASS SPECTROMETRY</scope>
    <scope>FUNCTION</scope>
    <scope>SUBUNIT</scope>
    <source>
        <strain>ATCC 27634 / DSM 579 / HB8</strain>
    </source>
</reference>
<reference key="4">
    <citation type="journal article" date="2006" name="Science">
        <title>Structure of the hydrophilic domain of respiratory complex I from Thermus thermophilus.</title>
        <authorList>
            <person name="Sazanov L.A."/>
            <person name="Hinchliffe P."/>
        </authorList>
    </citation>
    <scope>X-RAY CRYSTALLOGRAPHY (3.3 ANGSTROMS) OF ENZYME HYDROPHILIC DOMAIN IN COMPLEX WITH 4FE-4S CLUSTER</scope>
    <scope>FUNCTION</scope>
    <scope>SUBUNIT</scope>
    <scope>SUBCELLULAR LOCATION</scope>
    <scope>ELECTRON TRANSFER MECHANISM</scope>
</reference>
<protein>
    <recommendedName>
        <fullName>NADH-quinone oxidoreductase subunit 9</fullName>
        <ecNumber evidence="1">7.1.1.-</ecNumber>
    </recommendedName>
    <alternativeName>
        <fullName>NADH dehydrogenase I subunit 9</fullName>
    </alternativeName>
    <alternativeName>
        <fullName>NDH-1 subunit 9</fullName>
    </alternativeName>
</protein>
<dbReference type="EC" id="7.1.1.-" evidence="1"/>
<dbReference type="EMBL" id="U52917">
    <property type="protein sequence ID" value="AAA97946.1"/>
    <property type="molecule type" value="Genomic_DNA"/>
</dbReference>
<dbReference type="EMBL" id="AP008226">
    <property type="protein sequence ID" value="BAD69915.1"/>
    <property type="molecule type" value="Genomic_DNA"/>
</dbReference>
<dbReference type="PIR" id="T11906">
    <property type="entry name" value="T11906"/>
</dbReference>
<dbReference type="RefSeq" id="YP_143358.1">
    <property type="nucleotide sequence ID" value="NC_006461.1"/>
</dbReference>
<dbReference type="PDB" id="2FUG">
    <property type="method" value="X-ray"/>
    <property type="resolution" value="3.30 A"/>
    <property type="chains" value="9/G/P/Y=1-182"/>
</dbReference>
<dbReference type="PDB" id="2YBB">
    <property type="method" value="EM"/>
    <property type="resolution" value="19.00 A"/>
    <property type="chains" value="8=1-182"/>
</dbReference>
<dbReference type="PDB" id="3I9V">
    <property type="method" value="X-ray"/>
    <property type="resolution" value="3.10 A"/>
    <property type="chains" value="9/G=1-182"/>
</dbReference>
<dbReference type="PDB" id="3IAM">
    <property type="method" value="X-ray"/>
    <property type="resolution" value="3.10 A"/>
    <property type="chains" value="9/G=1-182"/>
</dbReference>
<dbReference type="PDB" id="3IAS">
    <property type="method" value="X-ray"/>
    <property type="resolution" value="3.15 A"/>
    <property type="chains" value="9/G/P/Y=1-182"/>
</dbReference>
<dbReference type="PDB" id="3M9S">
    <property type="method" value="X-ray"/>
    <property type="resolution" value="4.50 A"/>
    <property type="chains" value="9/G=1-182"/>
</dbReference>
<dbReference type="PDB" id="4HEA">
    <property type="method" value="X-ray"/>
    <property type="resolution" value="3.30 A"/>
    <property type="chains" value="9/O=1-182"/>
</dbReference>
<dbReference type="PDB" id="6I0D">
    <property type="method" value="X-ray"/>
    <property type="resolution" value="3.60 A"/>
    <property type="chains" value="9/O=1-182"/>
</dbReference>
<dbReference type="PDB" id="6I1P">
    <property type="method" value="X-ray"/>
    <property type="resolution" value="3.21 A"/>
    <property type="chains" value="9/O=1-182"/>
</dbReference>
<dbReference type="PDB" id="6Q8O">
    <property type="method" value="X-ray"/>
    <property type="resolution" value="3.60 A"/>
    <property type="chains" value="9/O=1-182"/>
</dbReference>
<dbReference type="PDB" id="6Q8W">
    <property type="method" value="X-ray"/>
    <property type="resolution" value="3.40 A"/>
    <property type="chains" value="9/O=1-182"/>
</dbReference>
<dbReference type="PDB" id="6Q8X">
    <property type="method" value="X-ray"/>
    <property type="resolution" value="3.51 A"/>
    <property type="chains" value="9/O=1-182"/>
</dbReference>
<dbReference type="PDB" id="6Y11">
    <property type="method" value="X-ray"/>
    <property type="resolution" value="3.11 A"/>
    <property type="chains" value="9/O=1-182"/>
</dbReference>
<dbReference type="PDB" id="6ZIY">
    <property type="method" value="EM"/>
    <property type="resolution" value="4.25 A"/>
    <property type="chains" value="9=1-182"/>
</dbReference>
<dbReference type="PDB" id="6ZJL">
    <property type="method" value="EM"/>
    <property type="resolution" value="4.30 A"/>
    <property type="chains" value="9=1-182"/>
</dbReference>
<dbReference type="PDB" id="6ZJN">
    <property type="method" value="EM"/>
    <property type="resolution" value="6.10 A"/>
    <property type="chains" value="9=1-182"/>
</dbReference>
<dbReference type="PDB" id="6ZJY">
    <property type="method" value="EM"/>
    <property type="resolution" value="5.50 A"/>
    <property type="chains" value="9=1-182"/>
</dbReference>
<dbReference type="PDBsum" id="2FUG"/>
<dbReference type="PDBsum" id="2YBB"/>
<dbReference type="PDBsum" id="3I9V"/>
<dbReference type="PDBsum" id="3IAM"/>
<dbReference type="PDBsum" id="3IAS"/>
<dbReference type="PDBsum" id="3M9S"/>
<dbReference type="PDBsum" id="4HEA"/>
<dbReference type="PDBsum" id="6I0D"/>
<dbReference type="PDBsum" id="6I1P"/>
<dbReference type="PDBsum" id="6Q8O"/>
<dbReference type="PDBsum" id="6Q8W"/>
<dbReference type="PDBsum" id="6Q8X"/>
<dbReference type="PDBsum" id="6Y11"/>
<dbReference type="PDBsum" id="6ZIY"/>
<dbReference type="PDBsum" id="6ZJL"/>
<dbReference type="PDBsum" id="6ZJN"/>
<dbReference type="PDBsum" id="6ZJY"/>
<dbReference type="EMDB" id="EMD-11231"/>
<dbReference type="EMDB" id="EMD-11235"/>
<dbReference type="EMDB" id="EMD-11237"/>
<dbReference type="EMDB" id="EMD-11238"/>
<dbReference type="SMR" id="Q56224"/>
<dbReference type="DIP" id="DIP-59267N"/>
<dbReference type="IntAct" id="Q56224">
    <property type="interactions" value="1"/>
</dbReference>
<dbReference type="TCDB" id="3.D.1.3.1">
    <property type="family name" value="the h+ or na+-translocating nadh dehydrogenase (ndh) family"/>
</dbReference>
<dbReference type="EnsemblBacteria" id="BAD69915">
    <property type="protein sequence ID" value="BAD69915"/>
    <property type="gene ID" value="BAD69915"/>
</dbReference>
<dbReference type="GeneID" id="3167944"/>
<dbReference type="KEGG" id="ttj:TTHA0092"/>
<dbReference type="PATRIC" id="fig|300852.9.peg.90"/>
<dbReference type="eggNOG" id="COG1143">
    <property type="taxonomic scope" value="Bacteria"/>
</dbReference>
<dbReference type="HOGENOM" id="CLU_067218_4_3_0"/>
<dbReference type="PhylomeDB" id="Q56224"/>
<dbReference type="EvolutionaryTrace" id="Q56224"/>
<dbReference type="Proteomes" id="UP000000532">
    <property type="component" value="Chromosome"/>
</dbReference>
<dbReference type="GO" id="GO:0005886">
    <property type="term" value="C:plasma membrane"/>
    <property type="evidence" value="ECO:0007669"/>
    <property type="project" value="UniProtKB-SubCell"/>
</dbReference>
<dbReference type="GO" id="GO:0051539">
    <property type="term" value="F:4 iron, 4 sulfur cluster binding"/>
    <property type="evidence" value="ECO:0007669"/>
    <property type="project" value="UniProtKB-KW"/>
</dbReference>
<dbReference type="GO" id="GO:0005506">
    <property type="term" value="F:iron ion binding"/>
    <property type="evidence" value="ECO:0007669"/>
    <property type="project" value="UniProtKB-UniRule"/>
</dbReference>
<dbReference type="GO" id="GO:0050136">
    <property type="term" value="F:NADH:ubiquinone reductase (non-electrogenic) activity"/>
    <property type="evidence" value="ECO:0007669"/>
    <property type="project" value="UniProtKB-UniRule"/>
</dbReference>
<dbReference type="GO" id="GO:0048038">
    <property type="term" value="F:quinone binding"/>
    <property type="evidence" value="ECO:0007669"/>
    <property type="project" value="UniProtKB-KW"/>
</dbReference>
<dbReference type="GO" id="GO:0009060">
    <property type="term" value="P:aerobic respiration"/>
    <property type="evidence" value="ECO:0007669"/>
    <property type="project" value="TreeGrafter"/>
</dbReference>
<dbReference type="Gene3D" id="3.30.70.3270">
    <property type="match status" value="1"/>
</dbReference>
<dbReference type="HAMAP" id="MF_01351">
    <property type="entry name" value="NDH1_NuoI"/>
    <property type="match status" value="1"/>
</dbReference>
<dbReference type="InterPro" id="IPR017896">
    <property type="entry name" value="4Fe4S_Fe-S-bd"/>
</dbReference>
<dbReference type="InterPro" id="IPR017900">
    <property type="entry name" value="4Fe4S_Fe_S_CS"/>
</dbReference>
<dbReference type="InterPro" id="IPR010226">
    <property type="entry name" value="NADH_quinone_OxRdtase_chainI"/>
</dbReference>
<dbReference type="NCBIfam" id="TIGR01971">
    <property type="entry name" value="NuoI"/>
    <property type="match status" value="1"/>
</dbReference>
<dbReference type="NCBIfam" id="NF004537">
    <property type="entry name" value="PRK05888.1-3"/>
    <property type="match status" value="1"/>
</dbReference>
<dbReference type="PANTHER" id="PTHR10849:SF20">
    <property type="entry name" value="NADH DEHYDROGENASE [UBIQUINONE] IRON-SULFUR PROTEIN 8, MITOCHONDRIAL"/>
    <property type="match status" value="1"/>
</dbReference>
<dbReference type="PANTHER" id="PTHR10849">
    <property type="entry name" value="NADH DEHYDROGENASE UBIQUINONE IRON-SULFUR PROTEIN 8, MITOCHONDRIAL"/>
    <property type="match status" value="1"/>
</dbReference>
<dbReference type="Pfam" id="PF12838">
    <property type="entry name" value="Fer4_7"/>
    <property type="match status" value="1"/>
</dbReference>
<dbReference type="SUPFAM" id="SSF54862">
    <property type="entry name" value="4Fe-4S ferredoxins"/>
    <property type="match status" value="1"/>
</dbReference>
<dbReference type="PROSITE" id="PS00198">
    <property type="entry name" value="4FE4S_FER_1"/>
    <property type="match status" value="2"/>
</dbReference>
<dbReference type="PROSITE" id="PS51379">
    <property type="entry name" value="4FE4S_FER_2"/>
    <property type="match status" value="2"/>
</dbReference>
<evidence type="ECO:0000269" key="1">
    <source>
    </source>
</evidence>
<evidence type="ECO:0000269" key="2">
    <source>
    </source>
</evidence>
<evidence type="ECO:0000269" key="3">
    <source ref="2"/>
</evidence>
<evidence type="ECO:0000305" key="4"/>
<evidence type="ECO:0000305" key="5">
    <source>
    </source>
</evidence>
<evidence type="ECO:0007829" key="6">
    <source>
        <dbReference type="PDB" id="3I9V"/>
    </source>
</evidence>
<evidence type="ECO:0007829" key="7">
    <source>
        <dbReference type="PDB" id="4HEA"/>
    </source>
</evidence>
<evidence type="ECO:0007829" key="8">
    <source>
        <dbReference type="PDB" id="6Y11"/>
    </source>
</evidence>
<proteinExistence type="evidence at protein level"/>
<accession>Q56224</accession>
<accession>Q5SM51</accession>
<name>NQO9_THET8</name>
<feature type="chain" id="PRO_0000118721" description="NADH-quinone oxidoreductase subunit 9">
    <location>
        <begin position="1"/>
        <end position="182"/>
    </location>
</feature>
<feature type="domain" description="4Fe-4S ferredoxin-type 1">
    <location>
        <begin position="43"/>
        <end position="73"/>
    </location>
</feature>
<feature type="domain" description="4Fe-4S ferredoxin-type 2">
    <location>
        <begin position="89"/>
        <end position="118"/>
    </location>
</feature>
<feature type="binding site" evidence="1">
    <location>
        <position position="53"/>
    </location>
    <ligand>
        <name>[4Fe-4S] cluster</name>
        <dbReference type="ChEBI" id="CHEBI:49883"/>
        <label>1</label>
    </ligand>
</feature>
<feature type="binding site" evidence="1">
    <location>
        <position position="56"/>
    </location>
    <ligand>
        <name>[4Fe-4S] cluster</name>
        <dbReference type="ChEBI" id="CHEBI:49883"/>
        <label>1</label>
    </ligand>
</feature>
<feature type="binding site" evidence="1">
    <location>
        <position position="57"/>
    </location>
    <ligand>
        <name>[4Fe-4S] cluster</name>
        <dbReference type="ChEBI" id="CHEBI:49883"/>
        <label>1</label>
    </ligand>
</feature>
<feature type="binding site" evidence="1">
    <location>
        <position position="59"/>
    </location>
    <ligand>
        <name>[4Fe-4S] cluster</name>
        <dbReference type="ChEBI" id="CHEBI:49883"/>
        <label>1</label>
    </ligand>
</feature>
<feature type="binding site" evidence="1">
    <location>
        <position position="63"/>
    </location>
    <ligand>
        <name>[4Fe-4S] cluster</name>
        <dbReference type="ChEBI" id="CHEBI:49883"/>
        <label>2</label>
    </ligand>
</feature>
<feature type="binding site" evidence="1">
    <location>
        <position position="98"/>
    </location>
    <ligand>
        <name>[4Fe-4S] cluster</name>
        <dbReference type="ChEBI" id="CHEBI:49883"/>
        <label>2</label>
    </ligand>
</feature>
<feature type="binding site" evidence="1">
    <location>
        <position position="99"/>
    </location>
    <ligand>
        <name>[4Fe-4S] cluster</name>
        <dbReference type="ChEBI" id="CHEBI:49883"/>
        <label>2</label>
    </ligand>
</feature>
<feature type="binding site" evidence="1">
    <location>
        <position position="101"/>
    </location>
    <ligand>
        <name>[4Fe-4S] cluster</name>
        <dbReference type="ChEBI" id="CHEBI:49883"/>
        <label>2</label>
    </ligand>
</feature>
<feature type="binding site" evidence="1">
    <location>
        <position position="104"/>
    </location>
    <ligand>
        <name>[4Fe-4S] cluster</name>
        <dbReference type="ChEBI" id="CHEBI:49883"/>
        <label>2</label>
    </ligand>
</feature>
<feature type="binding site" evidence="1">
    <location>
        <position position="108"/>
    </location>
    <ligand>
        <name>[4Fe-4S] cluster</name>
        <dbReference type="ChEBI" id="CHEBI:49883"/>
        <label>1</label>
    </ligand>
</feature>
<feature type="helix" evidence="8">
    <location>
        <begin position="4"/>
        <end position="18"/>
    </location>
</feature>
<feature type="turn" evidence="8">
    <location>
        <begin position="26"/>
        <end position="28"/>
    </location>
</feature>
<feature type="strand" evidence="6">
    <location>
        <begin position="40"/>
        <end position="43"/>
    </location>
</feature>
<feature type="helix" evidence="6">
    <location>
        <begin position="58"/>
        <end position="62"/>
    </location>
</feature>
<feature type="strand" evidence="6">
    <location>
        <begin position="68"/>
        <end position="73"/>
    </location>
</feature>
<feature type="strand" evidence="6">
    <location>
        <begin position="77"/>
        <end position="79"/>
    </location>
</feature>
<feature type="strand" evidence="6">
    <location>
        <begin position="81"/>
        <end position="85"/>
    </location>
</feature>
<feature type="strand" evidence="6">
    <location>
        <begin position="87"/>
        <end position="94"/>
    </location>
</feature>
<feature type="turn" evidence="6">
    <location>
        <begin position="95"/>
        <end position="97"/>
    </location>
</feature>
<feature type="helix" evidence="6">
    <location>
        <begin position="103"/>
        <end position="107"/>
    </location>
</feature>
<feature type="strand" evidence="6">
    <location>
        <begin position="109"/>
        <end position="111"/>
    </location>
</feature>
<feature type="strand" evidence="6">
    <location>
        <begin position="113"/>
        <end position="115"/>
    </location>
</feature>
<feature type="strand" evidence="6">
    <location>
        <begin position="123"/>
        <end position="125"/>
    </location>
</feature>
<feature type="helix" evidence="6">
    <location>
        <begin position="126"/>
        <end position="129"/>
    </location>
</feature>
<feature type="strand" evidence="7">
    <location>
        <begin position="130"/>
        <end position="132"/>
    </location>
</feature>
<feature type="helix" evidence="6">
    <location>
        <begin position="133"/>
        <end position="136"/>
    </location>
</feature>
<feature type="helix" evidence="6">
    <location>
        <begin position="144"/>
        <end position="149"/>
    </location>
</feature>
<feature type="turn" evidence="6">
    <location>
        <begin position="150"/>
        <end position="153"/>
    </location>
</feature>
<feature type="strand" evidence="6">
    <location>
        <begin position="160"/>
        <end position="162"/>
    </location>
</feature>
<feature type="helix" evidence="6">
    <location>
        <begin position="168"/>
        <end position="170"/>
    </location>
</feature>
<gene>
    <name type="primary">nqo9</name>
    <name type="ordered locus">TTHA0092</name>
</gene>
<organism>
    <name type="scientific">Thermus thermophilus (strain ATCC 27634 / DSM 579 / HB8)</name>
    <dbReference type="NCBI Taxonomy" id="300852"/>
    <lineage>
        <taxon>Bacteria</taxon>
        <taxon>Thermotogati</taxon>
        <taxon>Deinococcota</taxon>
        <taxon>Deinococci</taxon>
        <taxon>Thermales</taxon>
        <taxon>Thermaceae</taxon>
        <taxon>Thermus</taxon>
    </lineage>
</organism>